<evidence type="ECO:0000255" key="1">
    <source>
        <dbReference type="HAMAP-Rule" id="MF_00077"/>
    </source>
</evidence>
<feature type="chain" id="PRO_1000009471" description="tRNA (cytidine(56)-2'-O)-methyltransferase">
    <location>
        <begin position="1"/>
        <end position="177"/>
    </location>
</feature>
<feature type="binding site" evidence="1">
    <location>
        <position position="84"/>
    </location>
    <ligand>
        <name>S-adenosyl-L-methionine</name>
        <dbReference type="ChEBI" id="CHEBI:59789"/>
    </ligand>
</feature>
<feature type="binding site" evidence="1">
    <location>
        <begin position="109"/>
        <end position="113"/>
    </location>
    <ligand>
        <name>S-adenosyl-L-methionine</name>
        <dbReference type="ChEBI" id="CHEBI:59789"/>
    </ligand>
</feature>
<comment type="function">
    <text evidence="1">Specifically catalyzes the AdoMet-dependent 2'-O-ribose methylation of cytidine at position 56 in tRNAs.</text>
</comment>
<comment type="catalytic activity">
    <reaction evidence="1">
        <text>cytidine(56) in tRNA + S-adenosyl-L-methionine = 2'-O-methylcytidine(56) in tRNA + S-adenosyl-L-homocysteine + H(+)</text>
        <dbReference type="Rhea" id="RHEA:42968"/>
        <dbReference type="Rhea" id="RHEA-COMP:10308"/>
        <dbReference type="Rhea" id="RHEA-COMP:10309"/>
        <dbReference type="ChEBI" id="CHEBI:15378"/>
        <dbReference type="ChEBI" id="CHEBI:57856"/>
        <dbReference type="ChEBI" id="CHEBI:59789"/>
        <dbReference type="ChEBI" id="CHEBI:74495"/>
        <dbReference type="ChEBI" id="CHEBI:82748"/>
        <dbReference type="EC" id="2.1.1.206"/>
    </reaction>
</comment>
<comment type="subunit">
    <text evidence="1">Homodimer.</text>
</comment>
<comment type="subcellular location">
    <subcellularLocation>
        <location evidence="1">Cytoplasm</location>
    </subcellularLocation>
</comment>
<comment type="similarity">
    <text evidence="1">Belongs to the aTrm56 family.</text>
</comment>
<proteinExistence type="inferred from homology"/>
<protein>
    <recommendedName>
        <fullName evidence="1">tRNA (cytidine(56)-2'-O)-methyltransferase</fullName>
        <ecNumber evidence="1">2.1.1.206</ecNumber>
    </recommendedName>
    <alternativeName>
        <fullName evidence="1">tRNA ribose 2'-O-methyltransferase aTrm56</fullName>
    </alternativeName>
</protein>
<dbReference type="EC" id="2.1.1.206" evidence="1"/>
<dbReference type="EMBL" id="CP000099">
    <property type="protein sequence ID" value="AAZ72071.1"/>
    <property type="molecule type" value="Genomic_DNA"/>
</dbReference>
<dbReference type="SMR" id="Q466X1"/>
<dbReference type="STRING" id="269797.Mbar_A3187"/>
<dbReference type="PaxDb" id="269797-Mbar_A3187"/>
<dbReference type="KEGG" id="mba:Mbar_A3187"/>
<dbReference type="eggNOG" id="arCOG01857">
    <property type="taxonomic scope" value="Archaea"/>
</dbReference>
<dbReference type="HOGENOM" id="CLU_123709_0_0_2"/>
<dbReference type="OrthoDB" id="14397at2157"/>
<dbReference type="GO" id="GO:0005737">
    <property type="term" value="C:cytoplasm"/>
    <property type="evidence" value="ECO:0007669"/>
    <property type="project" value="UniProtKB-SubCell"/>
</dbReference>
<dbReference type="GO" id="GO:0106059">
    <property type="term" value="F:tRNA (cytidine(56)-2'-O)-methyltransferase activity"/>
    <property type="evidence" value="ECO:0007669"/>
    <property type="project" value="UniProtKB-EC"/>
</dbReference>
<dbReference type="GO" id="GO:0002128">
    <property type="term" value="P:tRNA nucleoside ribose methylation"/>
    <property type="evidence" value="ECO:0007669"/>
    <property type="project" value="UniProtKB-UniRule"/>
</dbReference>
<dbReference type="CDD" id="cd18083">
    <property type="entry name" value="aTrm56-like"/>
    <property type="match status" value="1"/>
</dbReference>
<dbReference type="Gene3D" id="3.40.1280.10">
    <property type="match status" value="1"/>
</dbReference>
<dbReference type="HAMAP" id="MF_00077">
    <property type="entry name" value="tRNA_methyltr_aTrm56"/>
    <property type="match status" value="1"/>
</dbReference>
<dbReference type="InterPro" id="IPR029028">
    <property type="entry name" value="Alpha/beta_knot_MTases"/>
</dbReference>
<dbReference type="InterPro" id="IPR029026">
    <property type="entry name" value="tRNA_m1G_MTases_N"/>
</dbReference>
<dbReference type="InterPro" id="IPR002845">
    <property type="entry name" value="tRNA_mtfrase_aTrm56"/>
</dbReference>
<dbReference type="NCBIfam" id="NF003048">
    <property type="entry name" value="PRK03958.1"/>
    <property type="match status" value="1"/>
</dbReference>
<dbReference type="PANTHER" id="PTHR42197">
    <property type="entry name" value="TRNA (CYTIDINE(56)-2'-O)-METHYLTRANSFERASE"/>
    <property type="match status" value="1"/>
</dbReference>
<dbReference type="PANTHER" id="PTHR42197:SF1">
    <property type="entry name" value="TRNA (CYTIDINE(56)-2'-O)-METHYLTRANSFERASE"/>
    <property type="match status" value="1"/>
</dbReference>
<dbReference type="Pfam" id="PF01994">
    <property type="entry name" value="Trm56"/>
    <property type="match status" value="1"/>
</dbReference>
<dbReference type="PIRSF" id="PIRSF016123">
    <property type="entry name" value="UCP016123"/>
    <property type="match status" value="1"/>
</dbReference>
<dbReference type="SUPFAM" id="SSF75217">
    <property type="entry name" value="alpha/beta knot"/>
    <property type="match status" value="1"/>
</dbReference>
<name>TRM56_METBF</name>
<sequence>MKRIVLLRLGHRPERDKRITTHVGLTARLLGAEGMLLASNDPGIIATLEDVVSRWGGNFYIKNNVNYKQEIKEWKAAGGKVCHLSMYGINLPDVTDELKSCDKLMIVVGAEKVPPEIYQLADWNVAVGSQPHSEVAAVAITLDRIADGEPLKREFQNAELTIVPAERGKQVIENLRD</sequence>
<reference key="1">
    <citation type="journal article" date="2006" name="J. Bacteriol.">
        <title>The Methanosarcina barkeri genome: comparative analysis with Methanosarcina acetivorans and Methanosarcina mazei reveals extensive rearrangement within methanosarcinal genomes.</title>
        <authorList>
            <person name="Maeder D.L."/>
            <person name="Anderson I."/>
            <person name="Brettin T.S."/>
            <person name="Bruce D.C."/>
            <person name="Gilna P."/>
            <person name="Han C.S."/>
            <person name="Lapidus A."/>
            <person name="Metcalf W.W."/>
            <person name="Saunders E."/>
            <person name="Tapia R."/>
            <person name="Sowers K.R."/>
        </authorList>
    </citation>
    <scope>NUCLEOTIDE SEQUENCE [LARGE SCALE GENOMIC DNA]</scope>
    <source>
        <strain>Fusaro / DSM 804</strain>
    </source>
</reference>
<accession>Q466X1</accession>
<gene>
    <name type="ordered locus">Mbar_A3187</name>
</gene>
<keyword id="KW-0963">Cytoplasm</keyword>
<keyword id="KW-0489">Methyltransferase</keyword>
<keyword id="KW-0949">S-adenosyl-L-methionine</keyword>
<keyword id="KW-0808">Transferase</keyword>
<keyword id="KW-0819">tRNA processing</keyword>
<organism>
    <name type="scientific">Methanosarcina barkeri (strain Fusaro / DSM 804)</name>
    <dbReference type="NCBI Taxonomy" id="269797"/>
    <lineage>
        <taxon>Archaea</taxon>
        <taxon>Methanobacteriati</taxon>
        <taxon>Methanobacteriota</taxon>
        <taxon>Stenosarchaea group</taxon>
        <taxon>Methanomicrobia</taxon>
        <taxon>Methanosarcinales</taxon>
        <taxon>Methanosarcinaceae</taxon>
        <taxon>Methanosarcina</taxon>
    </lineage>
</organism>